<feature type="signal peptide" evidence="1">
    <location>
        <begin position="1"/>
        <end position="26"/>
    </location>
</feature>
<feature type="chain" id="PRO_0000405947" description="Penicillin-binding protein activator LpoA">
    <location>
        <begin position="27"/>
        <end position="603"/>
    </location>
</feature>
<feature type="lipid moiety-binding region" description="N-palmitoyl cysteine" evidence="1">
    <location>
        <position position="27"/>
    </location>
</feature>
<feature type="lipid moiety-binding region" description="S-diacylglycerol cysteine" evidence="1">
    <location>
        <position position="27"/>
    </location>
</feature>
<reference key="1">
    <citation type="submission" date="2007-03" db="EMBL/GenBank/DDBJ databases">
        <authorList>
            <person name="Heidelberg J."/>
        </authorList>
    </citation>
    <scope>NUCLEOTIDE SEQUENCE [LARGE SCALE GENOMIC DNA]</scope>
    <source>
        <strain>ATCC 39541 / Classical Ogawa 395 / O395</strain>
    </source>
</reference>
<reference key="2">
    <citation type="journal article" date="2008" name="PLoS ONE">
        <title>A recalibrated molecular clock and independent origins for the cholera pandemic clones.</title>
        <authorList>
            <person name="Feng L."/>
            <person name="Reeves P.R."/>
            <person name="Lan R."/>
            <person name="Ren Y."/>
            <person name="Gao C."/>
            <person name="Zhou Z."/>
            <person name="Ren Y."/>
            <person name="Cheng J."/>
            <person name="Wang W."/>
            <person name="Wang J."/>
            <person name="Qian W."/>
            <person name="Li D."/>
            <person name="Wang L."/>
        </authorList>
    </citation>
    <scope>NUCLEOTIDE SEQUENCE [LARGE SCALE GENOMIC DNA]</scope>
    <source>
        <strain>ATCC 39541 / Classical Ogawa 395 / O395</strain>
    </source>
</reference>
<accession>A5F987</accession>
<name>LPOA_VIBC3</name>
<keyword id="KW-0998">Cell outer membrane</keyword>
<keyword id="KW-0133">Cell shape</keyword>
<keyword id="KW-0449">Lipoprotein</keyword>
<keyword id="KW-0472">Membrane</keyword>
<keyword id="KW-0564">Palmitate</keyword>
<keyword id="KW-0573">Peptidoglycan synthesis</keyword>
<keyword id="KW-0732">Signal</keyword>
<sequence length="603" mass="67670">MAMNHHQRRSVPRLLTPIALSIVLSACSTQPSSPDVVDITAQPLLTAQTYLMRADASQGNQQNDWLIMALKAAIEENNPDQAQLLIMRLAKQPLTPTQQAQWQLLRAQLLANTEQYQEALEQLSFQANWSLPQVQWQQYHQLRADIFTALDRSFDSTRELVALYGLSSNKDKEALADQIWANLNHYSASKIIKLSTEPDEAQLDGWLQLAIYMKTLGSDLPQLKNTLEKWLAENPQHPAAIYTPKAITDILALEIVKPTNTALLLPLTGKFAKQAQFIRDGFVFAMMNDADRQTNATLTIIDTNAETLESVDAILTSKQIDFVVGPLIKGNIEKLQQFQQSRGQMIPTLALNIPDQIDTTAGACYLALSPEQEVAQAAKHLFTQGYRYPLILAPQNAYGERVVEAFNEEWRRYSKNKVAVNLFGDKRQLQRNINSIFGLQDSQQNIAQMESLLGMGLESQPRSRRDIDAVYIVANSSELTLIKPFIEVAINPDTRPPKLFSNSNSNTGGRQYEDLSGVTYSDIPLLIQPAPSIKEQLTQIWPESSNAERRLQALGMDAYRLMVELPQMKIVEGYTIDGQTGVLSIDEQCVVQREISWAEHGVR</sequence>
<proteinExistence type="inferred from homology"/>
<dbReference type="EMBL" id="CP000627">
    <property type="protein sequence ID" value="ABQ21036.1"/>
    <property type="status" value="ALT_INIT"/>
    <property type="molecule type" value="Genomic_DNA"/>
</dbReference>
<dbReference type="EMBL" id="CP001235">
    <property type="protein sequence ID" value="ACP08617.1"/>
    <property type="status" value="ALT_INIT"/>
    <property type="molecule type" value="Genomic_DNA"/>
</dbReference>
<dbReference type="SMR" id="A5F987"/>
<dbReference type="KEGG" id="vco:VC0395_A0113"/>
<dbReference type="KEGG" id="vcr:VC395_0598"/>
<dbReference type="PATRIC" id="fig|345073.21.peg.584"/>
<dbReference type="eggNOG" id="COG3107">
    <property type="taxonomic scope" value="Bacteria"/>
</dbReference>
<dbReference type="HOGENOM" id="CLU_026091_1_0_6"/>
<dbReference type="Proteomes" id="UP000000249">
    <property type="component" value="Chromosome 2"/>
</dbReference>
<dbReference type="GO" id="GO:0031241">
    <property type="term" value="C:periplasmic side of cell outer membrane"/>
    <property type="evidence" value="ECO:0007669"/>
    <property type="project" value="UniProtKB-UniRule"/>
</dbReference>
<dbReference type="GO" id="GO:0030234">
    <property type="term" value="F:enzyme regulator activity"/>
    <property type="evidence" value="ECO:0007669"/>
    <property type="project" value="UniProtKB-UniRule"/>
</dbReference>
<dbReference type="GO" id="GO:0009252">
    <property type="term" value="P:peptidoglycan biosynthetic process"/>
    <property type="evidence" value="ECO:0007669"/>
    <property type="project" value="UniProtKB-UniRule"/>
</dbReference>
<dbReference type="GO" id="GO:0008360">
    <property type="term" value="P:regulation of cell shape"/>
    <property type="evidence" value="ECO:0007669"/>
    <property type="project" value="UniProtKB-KW"/>
</dbReference>
<dbReference type="CDD" id="cd06339">
    <property type="entry name" value="PBP1_YraM_LppC_lipoprotein-like"/>
    <property type="match status" value="1"/>
</dbReference>
<dbReference type="Gene3D" id="1.25.40.650">
    <property type="match status" value="1"/>
</dbReference>
<dbReference type="Gene3D" id="3.40.50.2300">
    <property type="match status" value="2"/>
</dbReference>
<dbReference type="Gene3D" id="1.25.40.10">
    <property type="entry name" value="Tetratricopeptide repeat domain"/>
    <property type="match status" value="1"/>
</dbReference>
<dbReference type="HAMAP" id="MF_01890">
    <property type="entry name" value="LpoA"/>
    <property type="match status" value="1"/>
</dbReference>
<dbReference type="InterPro" id="IPR007443">
    <property type="entry name" value="LpoA"/>
</dbReference>
<dbReference type="InterPro" id="IPR028082">
    <property type="entry name" value="Peripla_BP_I"/>
</dbReference>
<dbReference type="InterPro" id="IPR011990">
    <property type="entry name" value="TPR-like_helical_dom_sf"/>
</dbReference>
<dbReference type="PANTHER" id="PTHR38038">
    <property type="entry name" value="PENICILLIN-BINDING PROTEIN ACTIVATOR LPOA"/>
    <property type="match status" value="1"/>
</dbReference>
<dbReference type="PANTHER" id="PTHR38038:SF1">
    <property type="entry name" value="PENICILLIN-BINDING PROTEIN ACTIVATOR LPOA"/>
    <property type="match status" value="1"/>
</dbReference>
<dbReference type="Pfam" id="PF04348">
    <property type="entry name" value="LppC"/>
    <property type="match status" value="1"/>
</dbReference>
<dbReference type="SUPFAM" id="SSF53822">
    <property type="entry name" value="Periplasmic binding protein-like I"/>
    <property type="match status" value="1"/>
</dbReference>
<protein>
    <recommendedName>
        <fullName evidence="1">Penicillin-binding protein activator LpoA</fullName>
        <shortName evidence="1">PBP activator LpoA</shortName>
    </recommendedName>
</protein>
<evidence type="ECO:0000255" key="1">
    <source>
        <dbReference type="HAMAP-Rule" id="MF_01890"/>
    </source>
</evidence>
<evidence type="ECO:0000305" key="2"/>
<organism>
    <name type="scientific">Vibrio cholerae serotype O1 (strain ATCC 39541 / Classical Ogawa 395 / O395)</name>
    <dbReference type="NCBI Taxonomy" id="345073"/>
    <lineage>
        <taxon>Bacteria</taxon>
        <taxon>Pseudomonadati</taxon>
        <taxon>Pseudomonadota</taxon>
        <taxon>Gammaproteobacteria</taxon>
        <taxon>Vibrionales</taxon>
        <taxon>Vibrionaceae</taxon>
        <taxon>Vibrio</taxon>
    </lineage>
</organism>
<comment type="function">
    <text evidence="1">Regulator of peptidoglycan synthesis that is essential for the function of penicillin-binding protein 1A (PBP1a).</text>
</comment>
<comment type="subunit">
    <text evidence="1">Interacts with PBP1a.</text>
</comment>
<comment type="subcellular location">
    <subcellularLocation>
        <location evidence="1">Cell outer membrane</location>
        <topology evidence="1">Lipid-anchor</topology>
        <orientation evidence="1">Periplasmic side</orientation>
    </subcellularLocation>
</comment>
<comment type="similarity">
    <text evidence="1">Belongs to the LpoA family.</text>
</comment>
<comment type="sequence caution" evidence="2">
    <conflict type="erroneous initiation">
        <sequence resource="EMBL-CDS" id="ABQ21036"/>
    </conflict>
    <text>Extended N-terminus.</text>
</comment>
<comment type="sequence caution" evidence="2">
    <conflict type="erroneous initiation">
        <sequence resource="EMBL-CDS" id="ACP08617"/>
    </conflict>
    <text>Extended N-terminus.</text>
</comment>
<gene>
    <name evidence="1" type="primary">lpoA</name>
    <name type="ordered locus">VC0395_A0113</name>
    <name type="ordered locus">VC395_0598</name>
</gene>